<name>KLH12_XENLA</name>
<protein>
    <recommendedName>
        <fullName>Kelch-like protein 12</fullName>
    </recommendedName>
</protein>
<gene>
    <name type="primary">klhl12</name>
</gene>
<dbReference type="EMBL" id="BC070780">
    <property type="protein sequence ID" value="AAH70780.1"/>
    <property type="status" value="ALT_INIT"/>
    <property type="molecule type" value="mRNA"/>
</dbReference>
<dbReference type="RefSeq" id="NP_001084819.2">
    <property type="nucleotide sequence ID" value="NM_001091350.1"/>
</dbReference>
<dbReference type="RefSeq" id="XP_018100468.1">
    <property type="nucleotide sequence ID" value="XM_018244979.1"/>
</dbReference>
<dbReference type="RefSeq" id="XP_018100469.1">
    <property type="nucleotide sequence ID" value="XM_018244980.1"/>
</dbReference>
<dbReference type="SMR" id="Q6NRH0"/>
<dbReference type="DNASU" id="431860"/>
<dbReference type="AGR" id="Xenbase:XB-GENE-961998"/>
<dbReference type="Xenbase" id="XB-GENE-961998">
    <property type="gene designation" value="klhl12.L"/>
</dbReference>
<dbReference type="OMA" id="ETHNCLE"/>
<dbReference type="OrthoDB" id="45365at2759"/>
<dbReference type="UniPathway" id="UPA00143"/>
<dbReference type="Proteomes" id="UP000186698">
    <property type="component" value="Unplaced"/>
</dbReference>
<dbReference type="Bgee" id="431860">
    <property type="expression patterns" value="Expressed in muscle tissue and 19 other cell types or tissues"/>
</dbReference>
<dbReference type="GO" id="GO:0030127">
    <property type="term" value="C:COPII vesicle coat"/>
    <property type="evidence" value="ECO:0000250"/>
    <property type="project" value="UniProtKB"/>
</dbReference>
<dbReference type="GO" id="GO:0030134">
    <property type="term" value="C:COPII-coated ER to Golgi transport vesicle"/>
    <property type="evidence" value="ECO:0000250"/>
    <property type="project" value="UniProtKB"/>
</dbReference>
<dbReference type="GO" id="GO:0031463">
    <property type="term" value="C:Cul3-RING ubiquitin ligase complex"/>
    <property type="evidence" value="ECO:0000250"/>
    <property type="project" value="UniProtKB"/>
</dbReference>
<dbReference type="GO" id="GO:0005737">
    <property type="term" value="C:cytoplasm"/>
    <property type="evidence" value="ECO:0000318"/>
    <property type="project" value="GO_Central"/>
</dbReference>
<dbReference type="GO" id="GO:1990756">
    <property type="term" value="F:ubiquitin-like ligase-substrate adaptor activity"/>
    <property type="evidence" value="ECO:0000318"/>
    <property type="project" value="GO_Central"/>
</dbReference>
<dbReference type="GO" id="GO:0048208">
    <property type="term" value="P:COPII vesicle coating"/>
    <property type="evidence" value="ECO:0000250"/>
    <property type="project" value="UniProtKB"/>
</dbReference>
<dbReference type="GO" id="GO:0006888">
    <property type="term" value="P:endoplasmic reticulum to Golgi vesicle-mediated transport"/>
    <property type="evidence" value="ECO:0000250"/>
    <property type="project" value="UniProtKB"/>
</dbReference>
<dbReference type="GO" id="GO:0014032">
    <property type="term" value="P:neural crest cell development"/>
    <property type="evidence" value="ECO:0000250"/>
    <property type="project" value="UniProtKB"/>
</dbReference>
<dbReference type="GO" id="GO:0014029">
    <property type="term" value="P:neural crest formation"/>
    <property type="evidence" value="ECO:0000250"/>
    <property type="project" value="UniProtKB"/>
</dbReference>
<dbReference type="GO" id="GO:0043161">
    <property type="term" value="P:proteasome-mediated ubiquitin-dependent protein catabolic process"/>
    <property type="evidence" value="ECO:0000318"/>
    <property type="project" value="GO_Central"/>
</dbReference>
<dbReference type="GO" id="GO:0006513">
    <property type="term" value="P:protein monoubiquitination"/>
    <property type="evidence" value="ECO:0000250"/>
    <property type="project" value="UniProtKB"/>
</dbReference>
<dbReference type="GO" id="GO:0016055">
    <property type="term" value="P:Wnt signaling pathway"/>
    <property type="evidence" value="ECO:0000250"/>
    <property type="project" value="UniProtKB"/>
</dbReference>
<dbReference type="CDD" id="cd18452">
    <property type="entry name" value="BACK_KLHL12"/>
    <property type="match status" value="1"/>
</dbReference>
<dbReference type="CDD" id="cd18242">
    <property type="entry name" value="BTB_POZ_KLHL12_C3IP1_DKIR"/>
    <property type="match status" value="1"/>
</dbReference>
<dbReference type="FunFam" id="2.120.10.80:FF:000011">
    <property type="entry name" value="Kelch like family member 12"/>
    <property type="match status" value="1"/>
</dbReference>
<dbReference type="FunFam" id="1.25.40.420:FF:000001">
    <property type="entry name" value="Kelch-like family member 12"/>
    <property type="match status" value="1"/>
</dbReference>
<dbReference type="FunFam" id="3.30.710.10:FF:000001">
    <property type="entry name" value="Kelch-like family member 20"/>
    <property type="match status" value="1"/>
</dbReference>
<dbReference type="Gene3D" id="1.25.40.420">
    <property type="match status" value="1"/>
</dbReference>
<dbReference type="Gene3D" id="2.120.10.80">
    <property type="entry name" value="Kelch-type beta propeller"/>
    <property type="match status" value="1"/>
</dbReference>
<dbReference type="Gene3D" id="3.30.710.10">
    <property type="entry name" value="Potassium Channel Kv1.1, Chain A"/>
    <property type="match status" value="1"/>
</dbReference>
<dbReference type="InterPro" id="IPR011705">
    <property type="entry name" value="BACK"/>
</dbReference>
<dbReference type="InterPro" id="IPR017096">
    <property type="entry name" value="BTB-kelch_protein"/>
</dbReference>
<dbReference type="InterPro" id="IPR000210">
    <property type="entry name" value="BTB/POZ_dom"/>
</dbReference>
<dbReference type="InterPro" id="IPR015915">
    <property type="entry name" value="Kelch-typ_b-propeller"/>
</dbReference>
<dbReference type="InterPro" id="IPR006652">
    <property type="entry name" value="Kelch_1"/>
</dbReference>
<dbReference type="InterPro" id="IPR011333">
    <property type="entry name" value="SKP1/BTB/POZ_sf"/>
</dbReference>
<dbReference type="PANTHER" id="PTHR45632:SF3">
    <property type="entry name" value="KELCH-LIKE PROTEIN 32"/>
    <property type="match status" value="1"/>
</dbReference>
<dbReference type="PANTHER" id="PTHR45632">
    <property type="entry name" value="LD33804P"/>
    <property type="match status" value="1"/>
</dbReference>
<dbReference type="Pfam" id="PF07707">
    <property type="entry name" value="BACK"/>
    <property type="match status" value="1"/>
</dbReference>
<dbReference type="Pfam" id="PF00651">
    <property type="entry name" value="BTB"/>
    <property type="match status" value="1"/>
</dbReference>
<dbReference type="Pfam" id="PF01344">
    <property type="entry name" value="Kelch_1"/>
    <property type="match status" value="2"/>
</dbReference>
<dbReference type="Pfam" id="PF24681">
    <property type="entry name" value="Kelch_KLHDC2_KLHL20_DRC7"/>
    <property type="match status" value="1"/>
</dbReference>
<dbReference type="PIRSF" id="PIRSF037037">
    <property type="entry name" value="Kelch-like_protein_gigaxonin"/>
    <property type="match status" value="1"/>
</dbReference>
<dbReference type="PRINTS" id="PR00501">
    <property type="entry name" value="KELCHREPEAT"/>
</dbReference>
<dbReference type="SMART" id="SM00875">
    <property type="entry name" value="BACK"/>
    <property type="match status" value="1"/>
</dbReference>
<dbReference type="SMART" id="SM00225">
    <property type="entry name" value="BTB"/>
    <property type="match status" value="1"/>
</dbReference>
<dbReference type="SMART" id="SM00612">
    <property type="entry name" value="Kelch"/>
    <property type="match status" value="6"/>
</dbReference>
<dbReference type="SUPFAM" id="SSF117281">
    <property type="entry name" value="Kelch motif"/>
    <property type="match status" value="1"/>
</dbReference>
<dbReference type="SUPFAM" id="SSF54695">
    <property type="entry name" value="POZ domain"/>
    <property type="match status" value="1"/>
</dbReference>
<dbReference type="PROSITE" id="PS50097">
    <property type="entry name" value="BTB"/>
    <property type="match status" value="1"/>
</dbReference>
<evidence type="ECO:0000250" key="1">
    <source>
        <dbReference type="UniProtKB" id="Q53G59"/>
    </source>
</evidence>
<evidence type="ECO:0000255" key="2">
    <source>
        <dbReference type="PROSITE-ProRule" id="PRU00037"/>
    </source>
</evidence>
<evidence type="ECO:0000305" key="3"/>
<comment type="function">
    <text evidence="1">Substrate-specific adapter of a BCR (BTB-CUL3-RBX1) E3 ubiquitin ligase complex that acts as a negative regulator of Wnt signaling pathway and ER-Golgi transport. The BCR(KLHL12) complex is involved in ER-Golgi transport by regulating the size of COPII coats, thereby playing a key role in collagen export, which is required for embryonic stem (ES) cells division (By similarity).</text>
</comment>
<comment type="pathway">
    <text>Protein modification; protein ubiquitination.</text>
</comment>
<comment type="subunit">
    <text evidence="1">Component of the BCR(KLHL12) E3 ubiquitin ligase complex.</text>
</comment>
<comment type="subcellular location">
    <subcellularLocation>
        <location evidence="1">Cytoplasmic vesicle</location>
        <location evidence="1">COPII-coated vesicle</location>
    </subcellularLocation>
</comment>
<comment type="sequence caution" evidence="3">
    <conflict type="erroneous initiation">
        <sequence resource="EMBL-CDS" id="AAH70780"/>
    </conflict>
</comment>
<reference key="1">
    <citation type="submission" date="2004-05" db="EMBL/GenBank/DDBJ databases">
        <authorList>
            <consortium name="NIH - Xenopus Gene Collection (XGC) project"/>
        </authorList>
    </citation>
    <scope>NUCLEOTIDE SEQUENCE [LARGE SCALE MRNA]</scope>
    <source>
        <tissue>Oocyte</tissue>
    </source>
</reference>
<feature type="chain" id="PRO_0000234353" description="Kelch-like protein 12">
    <location>
        <begin position="1"/>
        <end position="564"/>
    </location>
</feature>
<feature type="domain" description="BTB" evidence="2">
    <location>
        <begin position="29"/>
        <end position="96"/>
    </location>
</feature>
<feature type="domain" description="BACK">
    <location>
        <begin position="131"/>
        <end position="232"/>
    </location>
</feature>
<feature type="repeat" description="Kelch 1">
    <location>
        <begin position="278"/>
        <end position="325"/>
    </location>
</feature>
<feature type="repeat" description="Kelch 2">
    <location>
        <begin position="327"/>
        <end position="375"/>
    </location>
</feature>
<feature type="repeat" description="Kelch 3">
    <location>
        <begin position="376"/>
        <end position="422"/>
    </location>
</feature>
<feature type="repeat" description="Kelch 4">
    <location>
        <begin position="423"/>
        <end position="469"/>
    </location>
</feature>
<feature type="repeat" description="Kelch 5">
    <location>
        <begin position="471"/>
        <end position="516"/>
    </location>
</feature>
<feature type="repeat" description="Kelch 6">
    <location>
        <begin position="518"/>
        <end position="563"/>
    </location>
</feature>
<keyword id="KW-0968">Cytoplasmic vesicle</keyword>
<keyword id="KW-0217">Developmental protein</keyword>
<keyword id="KW-0931">ER-Golgi transport</keyword>
<keyword id="KW-0880">Kelch repeat</keyword>
<keyword id="KW-1185">Reference proteome</keyword>
<keyword id="KW-0677">Repeat</keyword>
<keyword id="KW-0813">Transport</keyword>
<keyword id="KW-0833">Ubl conjugation pathway</keyword>
<keyword id="KW-0879">Wnt signaling pathway</keyword>
<sequence length="564" mass="63209">MAPKDIMTNSHAKSILNTMNSLRKSQTLCDVTLRVNLKDFPAHRIVLAACSDYFCAMFTNELSEKGKPYVDIQGLTSSTMEILLDFVYTETVHVTVENVQELLPAACLLQLKGVKQACCDFLESQLDPSNCLGIRDFAETHNCLELMQAAEVYSQKHFPEVVQHEEFMLLHQEEVEKLIHCDEIQINSEEPVFEAVINWVKHNRHEREKSLPQLLQYVRMPLLTPRYITDVIDAEPLIRCSLQCRDLVDEAKKFHLRPELRSQMQGPRTRVRLGANEVLLVIGGFGSQQSPIDIVEKYDPKTQEWSVLPSITRKRRYVATVSLGDRVYVIGGYDGRSRLSSVECLDYTSEEDGVWYSVAPMNVRRGLAGATTLGDMIYVSGGFDGSRRHTSMERYDPNIDQWSMLGDMQTAREGAGLVVANGVIYCLGGYDGLNILSSVERYDPHTGHWSHVTPMATKRSGAGVSLLNDHIYVVGGFDGTAHLSSVEAYNIRTDSWTTMTSMTTPRCYVGATVLRGRLYAIAGYDGNSLLNSVECYDPLIDSWAVVTSMATQRCDAGVCVLREK</sequence>
<proteinExistence type="evidence at transcript level"/>
<organism>
    <name type="scientific">Xenopus laevis</name>
    <name type="common">African clawed frog</name>
    <dbReference type="NCBI Taxonomy" id="8355"/>
    <lineage>
        <taxon>Eukaryota</taxon>
        <taxon>Metazoa</taxon>
        <taxon>Chordata</taxon>
        <taxon>Craniata</taxon>
        <taxon>Vertebrata</taxon>
        <taxon>Euteleostomi</taxon>
        <taxon>Amphibia</taxon>
        <taxon>Batrachia</taxon>
        <taxon>Anura</taxon>
        <taxon>Pipoidea</taxon>
        <taxon>Pipidae</taxon>
        <taxon>Xenopodinae</taxon>
        <taxon>Xenopus</taxon>
        <taxon>Xenopus</taxon>
    </lineage>
</organism>
<accession>Q6NRH0</accession>